<protein>
    <recommendedName>
        <fullName evidence="1">tRNA1(Val) (adenine(37)-N6)-methyltransferase</fullName>
        <ecNumber evidence="1">2.1.1.223</ecNumber>
    </recommendedName>
    <alternativeName>
        <fullName evidence="1">tRNA m6A37 methyltransferase</fullName>
    </alternativeName>
</protein>
<proteinExistence type="inferred from homology"/>
<name>TRMN6_CYTH3</name>
<dbReference type="EC" id="2.1.1.223" evidence="1"/>
<dbReference type="EMBL" id="CP000383">
    <property type="protein sequence ID" value="ABG59956.1"/>
    <property type="molecule type" value="Genomic_DNA"/>
</dbReference>
<dbReference type="RefSeq" id="WP_011586066.1">
    <property type="nucleotide sequence ID" value="NC_008255.1"/>
</dbReference>
<dbReference type="SMR" id="Q11RK8"/>
<dbReference type="STRING" id="269798.CHU_2705"/>
<dbReference type="DNASU" id="4184573"/>
<dbReference type="KEGG" id="chu:CHU_2705"/>
<dbReference type="eggNOG" id="COG4123">
    <property type="taxonomic scope" value="Bacteria"/>
</dbReference>
<dbReference type="HOGENOM" id="CLU_061983_0_0_10"/>
<dbReference type="OrthoDB" id="5383291at2"/>
<dbReference type="Proteomes" id="UP000001822">
    <property type="component" value="Chromosome"/>
</dbReference>
<dbReference type="GO" id="GO:0005737">
    <property type="term" value="C:cytoplasm"/>
    <property type="evidence" value="ECO:0007669"/>
    <property type="project" value="UniProtKB-SubCell"/>
</dbReference>
<dbReference type="GO" id="GO:0003676">
    <property type="term" value="F:nucleic acid binding"/>
    <property type="evidence" value="ECO:0007669"/>
    <property type="project" value="InterPro"/>
</dbReference>
<dbReference type="GO" id="GO:0016430">
    <property type="term" value="F:tRNA (adenine-N6)-methyltransferase activity"/>
    <property type="evidence" value="ECO:0007669"/>
    <property type="project" value="UniProtKB-UniRule"/>
</dbReference>
<dbReference type="GO" id="GO:0032259">
    <property type="term" value="P:methylation"/>
    <property type="evidence" value="ECO:0007669"/>
    <property type="project" value="UniProtKB-KW"/>
</dbReference>
<dbReference type="GO" id="GO:0008033">
    <property type="term" value="P:tRNA processing"/>
    <property type="evidence" value="ECO:0007669"/>
    <property type="project" value="UniProtKB-UniRule"/>
</dbReference>
<dbReference type="CDD" id="cd02440">
    <property type="entry name" value="AdoMet_MTases"/>
    <property type="match status" value="1"/>
</dbReference>
<dbReference type="Gene3D" id="3.40.50.150">
    <property type="entry name" value="Vaccinia Virus protein VP39"/>
    <property type="match status" value="1"/>
</dbReference>
<dbReference type="HAMAP" id="MF_01872">
    <property type="entry name" value="tRNA_methyltr_YfiC"/>
    <property type="match status" value="1"/>
</dbReference>
<dbReference type="InterPro" id="IPR002052">
    <property type="entry name" value="DNA_methylase_N6_adenine_CS"/>
</dbReference>
<dbReference type="InterPro" id="IPR029063">
    <property type="entry name" value="SAM-dependent_MTases_sf"/>
</dbReference>
<dbReference type="InterPro" id="IPR007848">
    <property type="entry name" value="Small_mtfrase_dom"/>
</dbReference>
<dbReference type="InterPro" id="IPR050210">
    <property type="entry name" value="tRNA_Adenine-N(6)_MTase"/>
</dbReference>
<dbReference type="InterPro" id="IPR022882">
    <property type="entry name" value="tRNA_adenine-N6_MeTrfase"/>
</dbReference>
<dbReference type="PANTHER" id="PTHR47739">
    <property type="entry name" value="TRNA1(VAL) (ADENINE(37)-N6)-METHYLTRANSFERASE"/>
    <property type="match status" value="1"/>
</dbReference>
<dbReference type="PANTHER" id="PTHR47739:SF1">
    <property type="entry name" value="TRNA1(VAL) (ADENINE(37)-N6)-METHYLTRANSFERASE"/>
    <property type="match status" value="1"/>
</dbReference>
<dbReference type="Pfam" id="PF05175">
    <property type="entry name" value="MTS"/>
    <property type="match status" value="1"/>
</dbReference>
<dbReference type="SUPFAM" id="SSF53335">
    <property type="entry name" value="S-adenosyl-L-methionine-dependent methyltransferases"/>
    <property type="match status" value="1"/>
</dbReference>
<dbReference type="PROSITE" id="PS00092">
    <property type="entry name" value="N6_MTASE"/>
    <property type="match status" value="1"/>
</dbReference>
<gene>
    <name type="ordered locus">CHU_2705</name>
</gene>
<feature type="chain" id="PRO_0000387346" description="tRNA1(Val) (adenine(37)-N6)-methyltransferase">
    <location>
        <begin position="1"/>
        <end position="238"/>
    </location>
</feature>
<reference key="1">
    <citation type="journal article" date="2007" name="Appl. Environ. Microbiol.">
        <title>Genome sequence of the cellulolytic gliding bacterium Cytophaga hutchinsonii.</title>
        <authorList>
            <person name="Xie G."/>
            <person name="Bruce D.C."/>
            <person name="Challacombe J.F."/>
            <person name="Chertkov O."/>
            <person name="Detter J.C."/>
            <person name="Gilna P."/>
            <person name="Han C.S."/>
            <person name="Lucas S."/>
            <person name="Misra M."/>
            <person name="Myers G.L."/>
            <person name="Richardson P."/>
            <person name="Tapia R."/>
            <person name="Thayer N."/>
            <person name="Thompson L.S."/>
            <person name="Brettin T.S."/>
            <person name="Henrissat B."/>
            <person name="Wilson D.B."/>
            <person name="McBride M.J."/>
        </authorList>
    </citation>
    <scope>NUCLEOTIDE SEQUENCE [LARGE SCALE GENOMIC DNA]</scope>
    <source>
        <strain>ATCC 33406 / DSM 1761 / JCM 20678 / CIP 103989 / IAM 12607 / NBRC 15051 / NCIMB 9469 / D465</strain>
    </source>
</reference>
<comment type="function">
    <text evidence="1">Specifically methylates the adenine in position 37 of tRNA(1)(Val) (anticodon cmo5UAC).</text>
</comment>
<comment type="catalytic activity">
    <reaction evidence="1">
        <text>adenosine(37) in tRNA1(Val) + S-adenosyl-L-methionine = N(6)-methyladenosine(37) in tRNA1(Val) + S-adenosyl-L-homocysteine + H(+)</text>
        <dbReference type="Rhea" id="RHEA:43160"/>
        <dbReference type="Rhea" id="RHEA-COMP:10369"/>
        <dbReference type="Rhea" id="RHEA-COMP:10370"/>
        <dbReference type="ChEBI" id="CHEBI:15378"/>
        <dbReference type="ChEBI" id="CHEBI:57856"/>
        <dbReference type="ChEBI" id="CHEBI:59789"/>
        <dbReference type="ChEBI" id="CHEBI:74411"/>
        <dbReference type="ChEBI" id="CHEBI:74449"/>
        <dbReference type="EC" id="2.1.1.223"/>
    </reaction>
</comment>
<comment type="subcellular location">
    <subcellularLocation>
        <location evidence="1">Cytoplasm</location>
    </subcellularLocation>
</comment>
<comment type="similarity">
    <text evidence="1">Belongs to the methyltransferase superfamily. tRNA (adenine-N(6)-)-methyltransferase family.</text>
</comment>
<sequence length="238" mass="27347">MSNSWFQFKQFTVQQDKTAMKVCTDSCVFGATVPVTTSTYTILDIGTGTGLLALMLAQRSNADIDAVELNKDAAQQATDNFFNSPWNERLHVHTCSIQDYFKFTTKQYDLIVCNPPFFSASLKTGNTSKDMALHQSHLLIDELIQVVSFMLKQSGDAYLLISIYEEVNFFQAANRVGLNVKRFQEMYDNETKLIRYVLHLRKDTEHMDHETQNFIIRSADKQYTAQFVEVLRAFYLNL</sequence>
<keyword id="KW-0963">Cytoplasm</keyword>
<keyword id="KW-0489">Methyltransferase</keyword>
<keyword id="KW-1185">Reference proteome</keyword>
<keyword id="KW-0949">S-adenosyl-L-methionine</keyword>
<keyword id="KW-0808">Transferase</keyword>
<keyword id="KW-0819">tRNA processing</keyword>
<organism>
    <name type="scientific">Cytophaga hutchinsonii (strain ATCC 33406 / DSM 1761 / CIP 103989 / NBRC 15051 / NCIMB 9469 / D465)</name>
    <dbReference type="NCBI Taxonomy" id="269798"/>
    <lineage>
        <taxon>Bacteria</taxon>
        <taxon>Pseudomonadati</taxon>
        <taxon>Bacteroidota</taxon>
        <taxon>Cytophagia</taxon>
        <taxon>Cytophagales</taxon>
        <taxon>Cytophagaceae</taxon>
        <taxon>Cytophaga</taxon>
    </lineage>
</organism>
<accession>Q11RK8</accession>
<evidence type="ECO:0000255" key="1">
    <source>
        <dbReference type="HAMAP-Rule" id="MF_01872"/>
    </source>
</evidence>